<comment type="similarity">
    <text evidence="1">Belongs to the bacterial ribosomal protein bS21 family.</text>
</comment>
<dbReference type="EMBL" id="CP000390">
    <property type="protein sequence ID" value="ABG64176.1"/>
    <property type="molecule type" value="Genomic_DNA"/>
</dbReference>
<dbReference type="SMR" id="Q11EJ9"/>
<dbReference type="STRING" id="266779.Meso_2800"/>
<dbReference type="KEGG" id="mes:Meso_2800"/>
<dbReference type="eggNOG" id="COG0828">
    <property type="taxonomic scope" value="Bacteria"/>
</dbReference>
<dbReference type="HOGENOM" id="CLU_159258_0_1_5"/>
<dbReference type="OrthoDB" id="9811907at2"/>
<dbReference type="GO" id="GO:1990904">
    <property type="term" value="C:ribonucleoprotein complex"/>
    <property type="evidence" value="ECO:0007669"/>
    <property type="project" value="UniProtKB-KW"/>
</dbReference>
<dbReference type="GO" id="GO:0005840">
    <property type="term" value="C:ribosome"/>
    <property type="evidence" value="ECO:0007669"/>
    <property type="project" value="UniProtKB-KW"/>
</dbReference>
<dbReference type="GO" id="GO:0003735">
    <property type="term" value="F:structural constituent of ribosome"/>
    <property type="evidence" value="ECO:0007669"/>
    <property type="project" value="InterPro"/>
</dbReference>
<dbReference type="GO" id="GO:0006412">
    <property type="term" value="P:translation"/>
    <property type="evidence" value="ECO:0007669"/>
    <property type="project" value="UniProtKB-UniRule"/>
</dbReference>
<dbReference type="Gene3D" id="1.20.5.1150">
    <property type="entry name" value="Ribosomal protein S8"/>
    <property type="match status" value="1"/>
</dbReference>
<dbReference type="HAMAP" id="MF_00358">
    <property type="entry name" value="Ribosomal_bS21"/>
    <property type="match status" value="1"/>
</dbReference>
<dbReference type="InterPro" id="IPR001911">
    <property type="entry name" value="Ribosomal_bS21"/>
</dbReference>
<dbReference type="InterPro" id="IPR018278">
    <property type="entry name" value="Ribosomal_bS21_CS"/>
</dbReference>
<dbReference type="InterPro" id="IPR038380">
    <property type="entry name" value="Ribosomal_bS21_sf"/>
</dbReference>
<dbReference type="NCBIfam" id="TIGR00030">
    <property type="entry name" value="S21p"/>
    <property type="match status" value="1"/>
</dbReference>
<dbReference type="PANTHER" id="PTHR21109">
    <property type="entry name" value="MITOCHONDRIAL 28S RIBOSOMAL PROTEIN S21"/>
    <property type="match status" value="1"/>
</dbReference>
<dbReference type="PANTHER" id="PTHR21109:SF0">
    <property type="entry name" value="SMALL RIBOSOMAL SUBUNIT PROTEIN BS21M"/>
    <property type="match status" value="1"/>
</dbReference>
<dbReference type="Pfam" id="PF01165">
    <property type="entry name" value="Ribosomal_S21"/>
    <property type="match status" value="1"/>
</dbReference>
<dbReference type="PRINTS" id="PR00976">
    <property type="entry name" value="RIBOSOMALS21"/>
</dbReference>
<dbReference type="PROSITE" id="PS01181">
    <property type="entry name" value="RIBOSOMAL_S21"/>
    <property type="match status" value="1"/>
</dbReference>
<accession>Q11EJ9</accession>
<name>RS211_CHESB</name>
<protein>
    <recommendedName>
        <fullName evidence="1">Small ribosomal subunit protein bS21A</fullName>
    </recommendedName>
    <alternativeName>
        <fullName evidence="3">30S ribosomal protein S21 1</fullName>
    </alternativeName>
</protein>
<reference key="1">
    <citation type="submission" date="2006-06" db="EMBL/GenBank/DDBJ databases">
        <title>Complete sequence of chromosome of Mesorhizobium sp. BNC1.</title>
        <authorList>
            <consortium name="US DOE Joint Genome Institute"/>
            <person name="Copeland A."/>
            <person name="Lucas S."/>
            <person name="Lapidus A."/>
            <person name="Barry K."/>
            <person name="Detter J.C."/>
            <person name="Glavina del Rio T."/>
            <person name="Hammon N."/>
            <person name="Israni S."/>
            <person name="Dalin E."/>
            <person name="Tice H."/>
            <person name="Pitluck S."/>
            <person name="Chertkov O."/>
            <person name="Brettin T."/>
            <person name="Bruce D."/>
            <person name="Han C."/>
            <person name="Tapia R."/>
            <person name="Gilna P."/>
            <person name="Schmutz J."/>
            <person name="Larimer F."/>
            <person name="Land M."/>
            <person name="Hauser L."/>
            <person name="Kyrpides N."/>
            <person name="Mikhailova N."/>
            <person name="Richardson P."/>
        </authorList>
    </citation>
    <scope>NUCLEOTIDE SEQUENCE [LARGE SCALE GENOMIC DNA]</scope>
    <source>
        <strain>BNC1</strain>
    </source>
</reference>
<keyword id="KW-0687">Ribonucleoprotein</keyword>
<keyword id="KW-0689">Ribosomal protein</keyword>
<evidence type="ECO:0000255" key="1">
    <source>
        <dbReference type="HAMAP-Rule" id="MF_00358"/>
    </source>
</evidence>
<evidence type="ECO:0000256" key="2">
    <source>
        <dbReference type="SAM" id="MobiDB-lite"/>
    </source>
</evidence>
<evidence type="ECO:0000305" key="3"/>
<gene>
    <name evidence="1" type="primary">rpsU1</name>
    <name type="ordered locus">Meso_2800</name>
</gene>
<sequence>MQVLVRDNNVDQALRALKKKMQREGIFREMKMRGHYEKPSEKRAREKAEAVRRARKLARKRAQREGLVSGRPAAAR</sequence>
<organism>
    <name type="scientific">Chelativorans sp. (strain BNC1)</name>
    <dbReference type="NCBI Taxonomy" id="266779"/>
    <lineage>
        <taxon>Bacteria</taxon>
        <taxon>Pseudomonadati</taxon>
        <taxon>Pseudomonadota</taxon>
        <taxon>Alphaproteobacteria</taxon>
        <taxon>Hyphomicrobiales</taxon>
        <taxon>Phyllobacteriaceae</taxon>
        <taxon>Chelativorans</taxon>
    </lineage>
</organism>
<proteinExistence type="inferred from homology"/>
<feature type="chain" id="PRO_0000266703" description="Small ribosomal subunit protein bS21A">
    <location>
        <begin position="1"/>
        <end position="76"/>
    </location>
</feature>
<feature type="region of interest" description="Disordered" evidence="2">
    <location>
        <begin position="35"/>
        <end position="76"/>
    </location>
</feature>
<feature type="compositionally biased region" description="Basic and acidic residues" evidence="2">
    <location>
        <begin position="35"/>
        <end position="52"/>
    </location>
</feature>
<feature type="compositionally biased region" description="Basic residues" evidence="2">
    <location>
        <begin position="53"/>
        <end position="62"/>
    </location>
</feature>